<name>SSRP_EHRRG</name>
<reference key="1">
    <citation type="journal article" date="2006" name="J. Bacteriol.">
        <title>Comparative genomic analysis of three strains of Ehrlichia ruminantium reveals an active process of genome size plasticity.</title>
        <authorList>
            <person name="Frutos R."/>
            <person name="Viari A."/>
            <person name="Ferraz C."/>
            <person name="Morgat A."/>
            <person name="Eychenie S."/>
            <person name="Kandassamy Y."/>
            <person name="Chantal I."/>
            <person name="Bensaid A."/>
            <person name="Coissac E."/>
            <person name="Vachiery N."/>
            <person name="Demaille J."/>
            <person name="Martinez D."/>
        </authorList>
    </citation>
    <scope>NUCLEOTIDE SEQUENCE [LARGE SCALE GENOMIC DNA]</scope>
    <source>
        <strain>Gardel</strain>
    </source>
</reference>
<feature type="chain" id="PRO_1000002051" description="SsrA-binding protein">
    <location>
        <begin position="1"/>
        <end position="148"/>
    </location>
</feature>
<evidence type="ECO:0000255" key="1">
    <source>
        <dbReference type="HAMAP-Rule" id="MF_00023"/>
    </source>
</evidence>
<proteinExistence type="inferred from homology"/>
<organism>
    <name type="scientific">Ehrlichia ruminantium (strain Gardel)</name>
    <dbReference type="NCBI Taxonomy" id="302409"/>
    <lineage>
        <taxon>Bacteria</taxon>
        <taxon>Pseudomonadati</taxon>
        <taxon>Pseudomonadota</taxon>
        <taxon>Alphaproteobacteria</taxon>
        <taxon>Rickettsiales</taxon>
        <taxon>Anaplasmataceae</taxon>
        <taxon>Ehrlichia</taxon>
    </lineage>
</organism>
<sequence>MDIIIENRKVRFNYFIIQEFDAGIVLIGSEVKSLRQRKVSIAESYVTERNMELWLCNLHISEYTQANTKNHNPTRPRKLLLKKKQIYKISGNMKNDGFTVVPLFLYFNDKGIAKAKIVIVKGKKLHDKRETIKARDWNREKNRILRGG</sequence>
<accession>Q5FF69</accession>
<protein>
    <recommendedName>
        <fullName evidence="1">SsrA-binding protein</fullName>
    </recommendedName>
    <alternativeName>
        <fullName evidence="1">Small protein B</fullName>
    </alternativeName>
</protein>
<keyword id="KW-0963">Cytoplasm</keyword>
<keyword id="KW-0694">RNA-binding</keyword>
<dbReference type="EMBL" id="CR925677">
    <property type="protein sequence ID" value="CAI27523.1"/>
    <property type="molecule type" value="Genomic_DNA"/>
</dbReference>
<dbReference type="RefSeq" id="WP_011255271.1">
    <property type="nucleotide sequence ID" value="NC_006831.1"/>
</dbReference>
<dbReference type="SMR" id="Q5FF69"/>
<dbReference type="KEGG" id="erg:ERGA_CDS_00710"/>
<dbReference type="HOGENOM" id="CLU_108953_0_1_5"/>
<dbReference type="OrthoDB" id="9805462at2"/>
<dbReference type="Proteomes" id="UP000000533">
    <property type="component" value="Chromosome"/>
</dbReference>
<dbReference type="GO" id="GO:0005829">
    <property type="term" value="C:cytosol"/>
    <property type="evidence" value="ECO:0007669"/>
    <property type="project" value="TreeGrafter"/>
</dbReference>
<dbReference type="GO" id="GO:0003723">
    <property type="term" value="F:RNA binding"/>
    <property type="evidence" value="ECO:0007669"/>
    <property type="project" value="UniProtKB-UniRule"/>
</dbReference>
<dbReference type="GO" id="GO:0070929">
    <property type="term" value="P:trans-translation"/>
    <property type="evidence" value="ECO:0007669"/>
    <property type="project" value="UniProtKB-UniRule"/>
</dbReference>
<dbReference type="CDD" id="cd09294">
    <property type="entry name" value="SmpB"/>
    <property type="match status" value="1"/>
</dbReference>
<dbReference type="Gene3D" id="2.40.280.10">
    <property type="match status" value="1"/>
</dbReference>
<dbReference type="HAMAP" id="MF_00023">
    <property type="entry name" value="SmpB"/>
    <property type="match status" value="1"/>
</dbReference>
<dbReference type="InterPro" id="IPR023620">
    <property type="entry name" value="SmpB"/>
</dbReference>
<dbReference type="InterPro" id="IPR000037">
    <property type="entry name" value="SsrA-bd_prot"/>
</dbReference>
<dbReference type="InterPro" id="IPR020081">
    <property type="entry name" value="SsrA-bd_prot_CS"/>
</dbReference>
<dbReference type="NCBIfam" id="NF003843">
    <property type="entry name" value="PRK05422.1"/>
    <property type="match status" value="1"/>
</dbReference>
<dbReference type="NCBIfam" id="TIGR00086">
    <property type="entry name" value="smpB"/>
    <property type="match status" value="1"/>
</dbReference>
<dbReference type="PANTHER" id="PTHR30308:SF2">
    <property type="entry name" value="SSRA-BINDING PROTEIN"/>
    <property type="match status" value="1"/>
</dbReference>
<dbReference type="PANTHER" id="PTHR30308">
    <property type="entry name" value="TMRNA-BINDING COMPONENT OF TRANS-TRANSLATION TAGGING COMPLEX"/>
    <property type="match status" value="1"/>
</dbReference>
<dbReference type="Pfam" id="PF01668">
    <property type="entry name" value="SmpB"/>
    <property type="match status" value="1"/>
</dbReference>
<dbReference type="SUPFAM" id="SSF74982">
    <property type="entry name" value="Small protein B (SmpB)"/>
    <property type="match status" value="1"/>
</dbReference>
<dbReference type="PROSITE" id="PS01317">
    <property type="entry name" value="SSRP"/>
    <property type="match status" value="1"/>
</dbReference>
<comment type="function">
    <text evidence="1">Required for rescue of stalled ribosomes mediated by trans-translation. Binds to transfer-messenger RNA (tmRNA), required for stable association of tmRNA with ribosomes. tmRNA and SmpB together mimic tRNA shape, replacing the anticodon stem-loop with SmpB. tmRNA is encoded by the ssrA gene; the 2 termini fold to resemble tRNA(Ala) and it encodes a 'tag peptide', a short internal open reading frame. During trans-translation Ala-aminoacylated tmRNA acts like a tRNA, entering the A-site of stalled ribosomes, displacing the stalled mRNA. The ribosome then switches to translate the ORF on the tmRNA; the nascent peptide is terminated with the 'tag peptide' encoded by the tmRNA and targeted for degradation. The ribosome is freed to recommence translation, which seems to be the essential function of trans-translation.</text>
</comment>
<comment type="subcellular location">
    <subcellularLocation>
        <location evidence="1">Cytoplasm</location>
    </subcellularLocation>
    <text evidence="1">The tmRNA-SmpB complex associates with stalled 70S ribosomes.</text>
</comment>
<comment type="similarity">
    <text evidence="1">Belongs to the SmpB family.</text>
</comment>
<gene>
    <name evidence="1" type="primary">smpB</name>
    <name type="ordered locus">ERGA_CDS_00710</name>
</gene>